<reference key="1">
    <citation type="journal article" date="2001" name="Nature">
        <title>Genome sequence of Yersinia pestis, the causative agent of plague.</title>
        <authorList>
            <person name="Parkhill J."/>
            <person name="Wren B.W."/>
            <person name="Thomson N.R."/>
            <person name="Titball R.W."/>
            <person name="Holden M.T.G."/>
            <person name="Prentice M.B."/>
            <person name="Sebaihia M."/>
            <person name="James K.D."/>
            <person name="Churcher C.M."/>
            <person name="Mungall K.L."/>
            <person name="Baker S."/>
            <person name="Basham D."/>
            <person name="Bentley S.D."/>
            <person name="Brooks K."/>
            <person name="Cerdeno-Tarraga A.-M."/>
            <person name="Chillingworth T."/>
            <person name="Cronin A."/>
            <person name="Davies R.M."/>
            <person name="Davis P."/>
            <person name="Dougan G."/>
            <person name="Feltwell T."/>
            <person name="Hamlin N."/>
            <person name="Holroyd S."/>
            <person name="Jagels K."/>
            <person name="Karlyshev A.V."/>
            <person name="Leather S."/>
            <person name="Moule S."/>
            <person name="Oyston P.C.F."/>
            <person name="Quail M.A."/>
            <person name="Rutherford K.M."/>
            <person name="Simmonds M."/>
            <person name="Skelton J."/>
            <person name="Stevens K."/>
            <person name="Whitehead S."/>
            <person name="Barrell B.G."/>
        </authorList>
    </citation>
    <scope>NUCLEOTIDE SEQUENCE [LARGE SCALE GENOMIC DNA]</scope>
    <source>
        <strain>CO-92 / Biovar Orientalis</strain>
    </source>
</reference>
<reference key="2">
    <citation type="journal article" date="2002" name="J. Bacteriol.">
        <title>Genome sequence of Yersinia pestis KIM.</title>
        <authorList>
            <person name="Deng W."/>
            <person name="Burland V."/>
            <person name="Plunkett G. III"/>
            <person name="Boutin A."/>
            <person name="Mayhew G.F."/>
            <person name="Liss P."/>
            <person name="Perna N.T."/>
            <person name="Rose D.J."/>
            <person name="Mau B."/>
            <person name="Zhou S."/>
            <person name="Schwartz D.C."/>
            <person name="Fetherston J.D."/>
            <person name="Lindler L.E."/>
            <person name="Brubaker R.R."/>
            <person name="Plano G.V."/>
            <person name="Straley S.C."/>
            <person name="McDonough K.A."/>
            <person name="Nilles M.L."/>
            <person name="Matson J.S."/>
            <person name="Blattner F.R."/>
            <person name="Perry R.D."/>
        </authorList>
    </citation>
    <scope>NUCLEOTIDE SEQUENCE [LARGE SCALE GENOMIC DNA]</scope>
    <source>
        <strain>KIM10+ / Biovar Mediaevalis</strain>
    </source>
</reference>
<reference key="3">
    <citation type="journal article" date="2004" name="DNA Res.">
        <title>Complete genome sequence of Yersinia pestis strain 91001, an isolate avirulent to humans.</title>
        <authorList>
            <person name="Song Y."/>
            <person name="Tong Z."/>
            <person name="Wang J."/>
            <person name="Wang L."/>
            <person name="Guo Z."/>
            <person name="Han Y."/>
            <person name="Zhang J."/>
            <person name="Pei D."/>
            <person name="Zhou D."/>
            <person name="Qin H."/>
            <person name="Pang X."/>
            <person name="Han Y."/>
            <person name="Zhai J."/>
            <person name="Li M."/>
            <person name="Cui B."/>
            <person name="Qi Z."/>
            <person name="Jin L."/>
            <person name="Dai R."/>
            <person name="Chen F."/>
            <person name="Li S."/>
            <person name="Ye C."/>
            <person name="Du Z."/>
            <person name="Lin W."/>
            <person name="Wang J."/>
            <person name="Yu J."/>
            <person name="Yang H."/>
            <person name="Wang J."/>
            <person name="Huang P."/>
            <person name="Yang R."/>
        </authorList>
    </citation>
    <scope>NUCLEOTIDE SEQUENCE [LARGE SCALE GENOMIC DNA]</scope>
    <source>
        <strain>91001 / Biovar Mediaevalis</strain>
    </source>
</reference>
<gene>
    <name evidence="1" type="primary">glmM</name>
    <name type="ordered locus">YPO3500</name>
    <name type="ordered locus">y0684</name>
    <name type="ordered locus">YP_0583</name>
</gene>
<protein>
    <recommendedName>
        <fullName evidence="1">Phosphoglucosamine mutase</fullName>
        <ecNumber evidence="1">5.4.2.10</ecNumber>
    </recommendedName>
</protein>
<accession>Q8ZBB8</accession>
<accession>Q0WBE9</accession>
<accession>Q74X72</accession>
<accession>Q7CKJ0</accession>
<organism>
    <name type="scientific">Yersinia pestis</name>
    <dbReference type="NCBI Taxonomy" id="632"/>
    <lineage>
        <taxon>Bacteria</taxon>
        <taxon>Pseudomonadati</taxon>
        <taxon>Pseudomonadota</taxon>
        <taxon>Gammaproteobacteria</taxon>
        <taxon>Enterobacterales</taxon>
        <taxon>Yersiniaceae</taxon>
        <taxon>Yersinia</taxon>
    </lineage>
</organism>
<dbReference type="EC" id="5.4.2.10" evidence="1"/>
<dbReference type="EMBL" id="AL590842">
    <property type="protein sequence ID" value="CAL22088.1"/>
    <property type="molecule type" value="Genomic_DNA"/>
</dbReference>
<dbReference type="EMBL" id="AE009952">
    <property type="protein sequence ID" value="AAM84272.1"/>
    <property type="molecule type" value="Genomic_DNA"/>
</dbReference>
<dbReference type="EMBL" id="AE017042">
    <property type="protein sequence ID" value="AAS60853.1"/>
    <property type="molecule type" value="Genomic_DNA"/>
</dbReference>
<dbReference type="PIR" id="AE0425">
    <property type="entry name" value="AE0425"/>
</dbReference>
<dbReference type="RefSeq" id="WP_002210189.1">
    <property type="nucleotide sequence ID" value="NZ_WUCM01000036.1"/>
</dbReference>
<dbReference type="RefSeq" id="YP_002348389.1">
    <property type="nucleotide sequence ID" value="NC_003143.1"/>
</dbReference>
<dbReference type="SMR" id="Q8ZBB8"/>
<dbReference type="STRING" id="214092.YPO3500"/>
<dbReference type="PaxDb" id="214092-YPO3500"/>
<dbReference type="DNASU" id="1145631"/>
<dbReference type="EnsemblBacteria" id="AAS60853">
    <property type="protein sequence ID" value="AAS60853"/>
    <property type="gene ID" value="YP_0583"/>
</dbReference>
<dbReference type="GeneID" id="57975214"/>
<dbReference type="KEGG" id="ype:YPO3500"/>
<dbReference type="KEGG" id="ypk:y0684"/>
<dbReference type="KEGG" id="ypm:YP_0583"/>
<dbReference type="PATRIC" id="fig|214092.21.peg.3994"/>
<dbReference type="eggNOG" id="COG1109">
    <property type="taxonomic scope" value="Bacteria"/>
</dbReference>
<dbReference type="HOGENOM" id="CLU_016950_7_0_6"/>
<dbReference type="OMA" id="SHNAMPD"/>
<dbReference type="OrthoDB" id="9803322at2"/>
<dbReference type="Proteomes" id="UP000000815">
    <property type="component" value="Chromosome"/>
</dbReference>
<dbReference type="Proteomes" id="UP000001019">
    <property type="component" value="Chromosome"/>
</dbReference>
<dbReference type="Proteomes" id="UP000002490">
    <property type="component" value="Chromosome"/>
</dbReference>
<dbReference type="GO" id="GO:0005829">
    <property type="term" value="C:cytosol"/>
    <property type="evidence" value="ECO:0000318"/>
    <property type="project" value="GO_Central"/>
</dbReference>
<dbReference type="GO" id="GO:0000287">
    <property type="term" value="F:magnesium ion binding"/>
    <property type="evidence" value="ECO:0007669"/>
    <property type="project" value="UniProtKB-UniRule"/>
</dbReference>
<dbReference type="GO" id="GO:0008966">
    <property type="term" value="F:phosphoglucosamine mutase activity"/>
    <property type="evidence" value="ECO:0000318"/>
    <property type="project" value="GO_Central"/>
</dbReference>
<dbReference type="GO" id="GO:0004615">
    <property type="term" value="F:phosphomannomutase activity"/>
    <property type="evidence" value="ECO:0000318"/>
    <property type="project" value="GO_Central"/>
</dbReference>
<dbReference type="GO" id="GO:0005975">
    <property type="term" value="P:carbohydrate metabolic process"/>
    <property type="evidence" value="ECO:0007669"/>
    <property type="project" value="InterPro"/>
</dbReference>
<dbReference type="GO" id="GO:0009252">
    <property type="term" value="P:peptidoglycan biosynthetic process"/>
    <property type="evidence" value="ECO:0000318"/>
    <property type="project" value="GO_Central"/>
</dbReference>
<dbReference type="GO" id="GO:0006048">
    <property type="term" value="P:UDP-N-acetylglucosamine biosynthetic process"/>
    <property type="evidence" value="ECO:0000318"/>
    <property type="project" value="GO_Central"/>
</dbReference>
<dbReference type="CDD" id="cd05802">
    <property type="entry name" value="GlmM"/>
    <property type="match status" value="1"/>
</dbReference>
<dbReference type="FunFam" id="3.30.310.50:FF:000001">
    <property type="entry name" value="Phosphoglucosamine mutase"/>
    <property type="match status" value="1"/>
</dbReference>
<dbReference type="FunFam" id="3.40.120.10:FF:000001">
    <property type="entry name" value="Phosphoglucosamine mutase"/>
    <property type="match status" value="1"/>
</dbReference>
<dbReference type="FunFam" id="3.40.120.10:FF:000002">
    <property type="entry name" value="Phosphoglucosamine mutase"/>
    <property type="match status" value="1"/>
</dbReference>
<dbReference type="Gene3D" id="3.40.120.10">
    <property type="entry name" value="Alpha-D-Glucose-1,6-Bisphosphate, subunit A, domain 3"/>
    <property type="match status" value="3"/>
</dbReference>
<dbReference type="Gene3D" id="3.30.310.50">
    <property type="entry name" value="Alpha-D-phosphohexomutase, C-terminal domain"/>
    <property type="match status" value="1"/>
</dbReference>
<dbReference type="HAMAP" id="MF_01554_B">
    <property type="entry name" value="GlmM_B"/>
    <property type="match status" value="1"/>
</dbReference>
<dbReference type="InterPro" id="IPR005844">
    <property type="entry name" value="A-D-PHexomutase_a/b/a-I"/>
</dbReference>
<dbReference type="InterPro" id="IPR016055">
    <property type="entry name" value="A-D-PHexomutase_a/b/a-I/II/III"/>
</dbReference>
<dbReference type="InterPro" id="IPR005845">
    <property type="entry name" value="A-D-PHexomutase_a/b/a-II"/>
</dbReference>
<dbReference type="InterPro" id="IPR005846">
    <property type="entry name" value="A-D-PHexomutase_a/b/a-III"/>
</dbReference>
<dbReference type="InterPro" id="IPR005843">
    <property type="entry name" value="A-D-PHexomutase_C"/>
</dbReference>
<dbReference type="InterPro" id="IPR036900">
    <property type="entry name" value="A-D-PHexomutase_C_sf"/>
</dbReference>
<dbReference type="InterPro" id="IPR016066">
    <property type="entry name" value="A-D-PHexomutase_CS"/>
</dbReference>
<dbReference type="InterPro" id="IPR005841">
    <property type="entry name" value="Alpha-D-phosphohexomutase_SF"/>
</dbReference>
<dbReference type="InterPro" id="IPR006352">
    <property type="entry name" value="GlmM_bact"/>
</dbReference>
<dbReference type="InterPro" id="IPR050060">
    <property type="entry name" value="Phosphoglucosamine_mutase"/>
</dbReference>
<dbReference type="NCBIfam" id="TIGR01455">
    <property type="entry name" value="glmM"/>
    <property type="match status" value="1"/>
</dbReference>
<dbReference type="NCBIfam" id="NF008139">
    <property type="entry name" value="PRK10887.1"/>
    <property type="match status" value="1"/>
</dbReference>
<dbReference type="PANTHER" id="PTHR42946:SF1">
    <property type="entry name" value="PHOSPHOGLUCOMUTASE (ALPHA-D-GLUCOSE-1,6-BISPHOSPHATE-DEPENDENT)"/>
    <property type="match status" value="1"/>
</dbReference>
<dbReference type="PANTHER" id="PTHR42946">
    <property type="entry name" value="PHOSPHOHEXOSE MUTASE"/>
    <property type="match status" value="1"/>
</dbReference>
<dbReference type="Pfam" id="PF02878">
    <property type="entry name" value="PGM_PMM_I"/>
    <property type="match status" value="1"/>
</dbReference>
<dbReference type="Pfam" id="PF02879">
    <property type="entry name" value="PGM_PMM_II"/>
    <property type="match status" value="1"/>
</dbReference>
<dbReference type="Pfam" id="PF02880">
    <property type="entry name" value="PGM_PMM_III"/>
    <property type="match status" value="1"/>
</dbReference>
<dbReference type="Pfam" id="PF00408">
    <property type="entry name" value="PGM_PMM_IV"/>
    <property type="match status" value="1"/>
</dbReference>
<dbReference type="PRINTS" id="PR00509">
    <property type="entry name" value="PGMPMM"/>
</dbReference>
<dbReference type="SUPFAM" id="SSF55957">
    <property type="entry name" value="Phosphoglucomutase, C-terminal domain"/>
    <property type="match status" value="1"/>
</dbReference>
<dbReference type="SUPFAM" id="SSF53738">
    <property type="entry name" value="Phosphoglucomutase, first 3 domains"/>
    <property type="match status" value="3"/>
</dbReference>
<dbReference type="PROSITE" id="PS00710">
    <property type="entry name" value="PGM_PMM"/>
    <property type="match status" value="1"/>
</dbReference>
<name>GLMM_YERPE</name>
<feature type="chain" id="PRO_0000148010" description="Phosphoglucosamine mutase">
    <location>
        <begin position="1"/>
        <end position="446"/>
    </location>
</feature>
<feature type="active site" description="Phosphoserine intermediate" evidence="1">
    <location>
        <position position="102"/>
    </location>
</feature>
<feature type="binding site" description="via phosphate group" evidence="1">
    <location>
        <position position="102"/>
    </location>
    <ligand>
        <name>Mg(2+)</name>
        <dbReference type="ChEBI" id="CHEBI:18420"/>
    </ligand>
</feature>
<feature type="binding site" evidence="1">
    <location>
        <position position="241"/>
    </location>
    <ligand>
        <name>Mg(2+)</name>
        <dbReference type="ChEBI" id="CHEBI:18420"/>
    </ligand>
</feature>
<feature type="binding site" evidence="1">
    <location>
        <position position="243"/>
    </location>
    <ligand>
        <name>Mg(2+)</name>
        <dbReference type="ChEBI" id="CHEBI:18420"/>
    </ligand>
</feature>
<feature type="binding site" evidence="1">
    <location>
        <position position="245"/>
    </location>
    <ligand>
        <name>Mg(2+)</name>
        <dbReference type="ChEBI" id="CHEBI:18420"/>
    </ligand>
</feature>
<feature type="modified residue" description="Phosphoserine" evidence="1">
    <location>
        <position position="102"/>
    </location>
</feature>
<comment type="function">
    <text evidence="1">Catalyzes the conversion of glucosamine-6-phosphate to glucosamine-1-phosphate.</text>
</comment>
<comment type="catalytic activity">
    <reaction evidence="1">
        <text>alpha-D-glucosamine 1-phosphate = D-glucosamine 6-phosphate</text>
        <dbReference type="Rhea" id="RHEA:23424"/>
        <dbReference type="ChEBI" id="CHEBI:58516"/>
        <dbReference type="ChEBI" id="CHEBI:58725"/>
        <dbReference type="EC" id="5.4.2.10"/>
    </reaction>
</comment>
<comment type="cofactor">
    <cofactor evidence="1">
        <name>Mg(2+)</name>
        <dbReference type="ChEBI" id="CHEBI:18420"/>
    </cofactor>
    <text evidence="1">Binds 1 Mg(2+) ion per subunit.</text>
</comment>
<comment type="PTM">
    <text evidence="1">Activated by phosphorylation.</text>
</comment>
<comment type="similarity">
    <text evidence="1">Belongs to the phosphohexose mutase family.</text>
</comment>
<proteinExistence type="inferred from homology"/>
<sequence length="446" mass="47898">MSNRKYFGTDGIRGKVGESPITPDFVLKLGWAAGKVLARHGSRKIIIGKDTRISGYMLESALEAGLAAAGLSALFTGPMPTPAVAYLTRTFRAEAGIVISASHNPFYDNGIKFFSIDGTKLPDDVEEAIEAEMEKPLTCVESAELGKANRIVDAAGRYIEFCKGTFPSELSLNELKIVVDCANGATYHIAPSVLRELGATVITIGCEPDGMNINEECGATDVRLLQERVLAEGAHVGLAFDGDGDRLMMVDHLGNKVDGDQILYIIAREGLRQGQLKGGAVGTLMSNMGLQLALKDLGIPFVRAKVGDRYVLEAMQEKGWRIGAENSGHVILLDKTTTGDGIVAGLQVLTAMVRNHMSLHDLCSGMKLLPQILVNVRFSGEHNPLKSDEVEEVTRQVEKELGGRGRVLLRKSGTEPLIRVMVEGDAEESLIAEMANRIADAVKAAG</sequence>
<evidence type="ECO:0000255" key="1">
    <source>
        <dbReference type="HAMAP-Rule" id="MF_01554"/>
    </source>
</evidence>
<keyword id="KW-0413">Isomerase</keyword>
<keyword id="KW-0460">Magnesium</keyword>
<keyword id="KW-0479">Metal-binding</keyword>
<keyword id="KW-0597">Phosphoprotein</keyword>
<keyword id="KW-1185">Reference proteome</keyword>